<organism>
    <name type="scientific">Cryptococcus neoformans var. neoformans serotype D (strain B-3501A)</name>
    <name type="common">Filobasidiella neoformans</name>
    <dbReference type="NCBI Taxonomy" id="283643"/>
    <lineage>
        <taxon>Eukaryota</taxon>
        <taxon>Fungi</taxon>
        <taxon>Dikarya</taxon>
        <taxon>Basidiomycota</taxon>
        <taxon>Agaricomycotina</taxon>
        <taxon>Tremellomycetes</taxon>
        <taxon>Tremellales</taxon>
        <taxon>Cryptococcaceae</taxon>
        <taxon>Cryptococcus</taxon>
        <taxon>Cryptococcus neoformans species complex</taxon>
    </lineage>
</organism>
<dbReference type="EC" id="3.1.-.-"/>
<dbReference type="EMBL" id="AAEY01000013">
    <property type="protein sequence ID" value="EAL22008.1"/>
    <property type="molecule type" value="Genomic_DNA"/>
</dbReference>
<dbReference type="RefSeq" id="XP_776655.1">
    <property type="nucleotide sequence ID" value="XM_771562.1"/>
</dbReference>
<dbReference type="SMR" id="P0CQ45"/>
<dbReference type="GeneID" id="4934813"/>
<dbReference type="KEGG" id="cnb:CNBC1480"/>
<dbReference type="VEuPathDB" id="FungiDB:CNBC1480"/>
<dbReference type="HOGENOM" id="CLU_022453_6_0_1"/>
<dbReference type="OrthoDB" id="7885at5206"/>
<dbReference type="GO" id="GO:0005634">
    <property type="term" value="C:nucleus"/>
    <property type="evidence" value="ECO:0007669"/>
    <property type="project" value="UniProtKB-SubCell"/>
</dbReference>
<dbReference type="GO" id="GO:0008408">
    <property type="term" value="F:3'-5' exonuclease activity"/>
    <property type="evidence" value="ECO:0007669"/>
    <property type="project" value="InterPro"/>
</dbReference>
<dbReference type="GO" id="GO:0003676">
    <property type="term" value="F:nucleic acid binding"/>
    <property type="evidence" value="ECO:0007669"/>
    <property type="project" value="InterPro"/>
</dbReference>
<dbReference type="GO" id="GO:0000027">
    <property type="term" value="P:ribosomal large subunit assembly"/>
    <property type="evidence" value="ECO:0007669"/>
    <property type="project" value="TreeGrafter"/>
</dbReference>
<dbReference type="GO" id="GO:0006364">
    <property type="term" value="P:rRNA processing"/>
    <property type="evidence" value="ECO:0007669"/>
    <property type="project" value="UniProtKB-KW"/>
</dbReference>
<dbReference type="CDD" id="cd06144">
    <property type="entry name" value="REX4_like"/>
    <property type="match status" value="1"/>
</dbReference>
<dbReference type="FunFam" id="3.30.420.10:FF:000007">
    <property type="entry name" value="Interferon-stimulated exonuclease gene 20"/>
    <property type="match status" value="1"/>
</dbReference>
<dbReference type="Gene3D" id="3.30.420.10">
    <property type="entry name" value="Ribonuclease H-like superfamily/Ribonuclease H"/>
    <property type="match status" value="1"/>
</dbReference>
<dbReference type="InterPro" id="IPR013520">
    <property type="entry name" value="Exonuclease_RNaseT/DNA_pol3"/>
</dbReference>
<dbReference type="InterPro" id="IPR037431">
    <property type="entry name" value="REX4_DEDDh_dom"/>
</dbReference>
<dbReference type="InterPro" id="IPR047021">
    <property type="entry name" value="REXO1/3/4-like"/>
</dbReference>
<dbReference type="InterPro" id="IPR012337">
    <property type="entry name" value="RNaseH-like_sf"/>
</dbReference>
<dbReference type="InterPro" id="IPR036397">
    <property type="entry name" value="RNaseH_sf"/>
</dbReference>
<dbReference type="PANTHER" id="PTHR12801:SF45">
    <property type="entry name" value="RNA EXONUCLEASE 4"/>
    <property type="match status" value="1"/>
</dbReference>
<dbReference type="PANTHER" id="PTHR12801">
    <property type="entry name" value="RNA EXONUCLEASE REXO1 / RECO3 FAMILY MEMBER-RELATED"/>
    <property type="match status" value="1"/>
</dbReference>
<dbReference type="Pfam" id="PF00929">
    <property type="entry name" value="RNase_T"/>
    <property type="match status" value="1"/>
</dbReference>
<dbReference type="SMART" id="SM00479">
    <property type="entry name" value="EXOIII"/>
    <property type="match status" value="1"/>
</dbReference>
<dbReference type="SUPFAM" id="SSF53098">
    <property type="entry name" value="Ribonuclease H-like"/>
    <property type="match status" value="1"/>
</dbReference>
<evidence type="ECO:0000250" key="1"/>
<evidence type="ECO:0000256" key="2">
    <source>
        <dbReference type="SAM" id="MobiDB-lite"/>
    </source>
</evidence>
<evidence type="ECO:0000305" key="3"/>
<accession>P0CQ45</accession>
<accession>Q55WJ1</accession>
<accession>Q5KJQ4</accession>
<protein>
    <recommendedName>
        <fullName>RNA exonuclease 4</fullName>
        <ecNumber>3.1.-.-</ecNumber>
    </recommendedName>
</protein>
<keyword id="KW-0269">Exonuclease</keyword>
<keyword id="KW-0378">Hydrolase</keyword>
<keyword id="KW-0540">Nuclease</keyword>
<keyword id="KW-0539">Nucleus</keyword>
<keyword id="KW-0698">rRNA processing</keyword>
<comment type="function">
    <text evidence="1">Exoribonuclease involved in ribosome biosynthesis. Involved in the processing of ITS1, the internal transcribed spacer localized between the 18S and 5.8S rRNAs (By similarity).</text>
</comment>
<comment type="subcellular location">
    <subcellularLocation>
        <location evidence="1">Nucleus</location>
    </subcellularLocation>
</comment>
<comment type="similarity">
    <text evidence="3">Belongs to the REXO4 family.</text>
</comment>
<sequence>MDKKKAPGQTVASSNWLQLQSTLSTITKEKDVSNSKAHNSRSSQSPSSSLRSSSRIQRKSKHSQGVGQYMGRVEVASTAKTTVSQLRKGKVISNEPCILLEAFSDSPLLHELRHMVLGNHLLSESQKEPGQYLAIDCEMVGVGPNGMENTLARVSIVNYHGAVILDTFVQPREPVTDYRTWISGVKQSDLLGAPQFDEVNKQVANLLHDKILIGHAIDNDLKVLMLTHPGPLTRDTQKYKPLQEIAKNKRPGLKKLSELLLGVQIQTGAHSSVVDARVAMALYRLHKKEWERSVWRQTEAYRSISSVNKPEHVLGKRGHDEKEAEDGEETAGESKRKNRKKSGNGGGRQQFPGGGRKGISSGLDVIVRRNGQRVDENGRGDGTSRRKAGRGEISTFTGGESWWEQPAA</sequence>
<gene>
    <name type="primary">REX4</name>
    <name type="ordered locus">CNBC1480</name>
</gene>
<proteinExistence type="inferred from homology"/>
<feature type="chain" id="PRO_0000410233" description="RNA exonuclease 4">
    <location>
        <begin position="1"/>
        <end position="408"/>
    </location>
</feature>
<feature type="domain" description="Exonuclease">
    <location>
        <begin position="131"/>
        <end position="292"/>
    </location>
</feature>
<feature type="region of interest" description="Disordered" evidence="2">
    <location>
        <begin position="27"/>
        <end position="70"/>
    </location>
</feature>
<feature type="region of interest" description="Disordered" evidence="2">
    <location>
        <begin position="310"/>
        <end position="408"/>
    </location>
</feature>
<feature type="compositionally biased region" description="Low complexity" evidence="2">
    <location>
        <begin position="40"/>
        <end position="55"/>
    </location>
</feature>
<feature type="compositionally biased region" description="Basic and acidic residues" evidence="2">
    <location>
        <begin position="310"/>
        <end position="322"/>
    </location>
</feature>
<feature type="compositionally biased region" description="Gly residues" evidence="2">
    <location>
        <begin position="343"/>
        <end position="357"/>
    </location>
</feature>
<feature type="compositionally biased region" description="Basic and acidic residues" evidence="2">
    <location>
        <begin position="372"/>
        <end position="384"/>
    </location>
</feature>
<name>REXO4_CRYNB</name>
<reference key="1">
    <citation type="journal article" date="2005" name="Science">
        <title>The genome of the basidiomycetous yeast and human pathogen Cryptococcus neoformans.</title>
        <authorList>
            <person name="Loftus B.J."/>
            <person name="Fung E."/>
            <person name="Roncaglia P."/>
            <person name="Rowley D."/>
            <person name="Amedeo P."/>
            <person name="Bruno D."/>
            <person name="Vamathevan J."/>
            <person name="Miranda M."/>
            <person name="Anderson I.J."/>
            <person name="Fraser J.A."/>
            <person name="Allen J.E."/>
            <person name="Bosdet I.E."/>
            <person name="Brent M.R."/>
            <person name="Chiu R."/>
            <person name="Doering T.L."/>
            <person name="Donlin M.J."/>
            <person name="D'Souza C.A."/>
            <person name="Fox D.S."/>
            <person name="Grinberg V."/>
            <person name="Fu J."/>
            <person name="Fukushima M."/>
            <person name="Haas B.J."/>
            <person name="Huang J.C."/>
            <person name="Janbon G."/>
            <person name="Jones S.J.M."/>
            <person name="Koo H.L."/>
            <person name="Krzywinski M.I."/>
            <person name="Kwon-Chung K.J."/>
            <person name="Lengeler K.B."/>
            <person name="Maiti R."/>
            <person name="Marra M.A."/>
            <person name="Marra R.E."/>
            <person name="Mathewson C.A."/>
            <person name="Mitchell T.G."/>
            <person name="Pertea M."/>
            <person name="Riggs F.R."/>
            <person name="Salzberg S.L."/>
            <person name="Schein J.E."/>
            <person name="Shvartsbeyn A."/>
            <person name="Shin H."/>
            <person name="Shumway M."/>
            <person name="Specht C.A."/>
            <person name="Suh B.B."/>
            <person name="Tenney A."/>
            <person name="Utterback T.R."/>
            <person name="Wickes B.L."/>
            <person name="Wortman J.R."/>
            <person name="Wye N.H."/>
            <person name="Kronstad J.W."/>
            <person name="Lodge J.K."/>
            <person name="Heitman J."/>
            <person name="Davis R.W."/>
            <person name="Fraser C.M."/>
            <person name="Hyman R.W."/>
        </authorList>
    </citation>
    <scope>NUCLEOTIDE SEQUENCE [LARGE SCALE GENOMIC DNA]</scope>
    <source>
        <strain>B-3501A</strain>
    </source>
</reference>